<comment type="function">
    <text evidence="1">With S4 and S12 plays an important role in translational accuracy.</text>
</comment>
<comment type="function">
    <text evidence="1">Located at the back of the 30S subunit body where it stabilizes the conformation of the head with respect to the body.</text>
</comment>
<comment type="subunit">
    <text evidence="1">Part of the 30S ribosomal subunit. Contacts proteins S4 and S8.</text>
</comment>
<comment type="domain">
    <text>The N-terminal domain interacts with the head of the 30S subunit; the C-terminal domain interacts with the body and contacts protein S4. The interaction surface between S4 and S5 is involved in control of translational fidelity.</text>
</comment>
<comment type="similarity">
    <text evidence="1">Belongs to the universal ribosomal protein uS5 family.</text>
</comment>
<accession>A2RC31</accession>
<gene>
    <name evidence="1" type="primary">rpsE</name>
    <name type="ordered locus">SpyM50061</name>
</gene>
<keyword id="KW-0687">Ribonucleoprotein</keyword>
<keyword id="KW-0689">Ribosomal protein</keyword>
<keyword id="KW-0694">RNA-binding</keyword>
<keyword id="KW-0699">rRNA-binding</keyword>
<organism>
    <name type="scientific">Streptococcus pyogenes serotype M5 (strain Manfredo)</name>
    <dbReference type="NCBI Taxonomy" id="160491"/>
    <lineage>
        <taxon>Bacteria</taxon>
        <taxon>Bacillati</taxon>
        <taxon>Bacillota</taxon>
        <taxon>Bacilli</taxon>
        <taxon>Lactobacillales</taxon>
        <taxon>Streptococcaceae</taxon>
        <taxon>Streptococcus</taxon>
    </lineage>
</organism>
<evidence type="ECO:0000255" key="1">
    <source>
        <dbReference type="HAMAP-Rule" id="MF_01307"/>
    </source>
</evidence>
<evidence type="ECO:0000305" key="2"/>
<dbReference type="EMBL" id="AM295007">
    <property type="protein sequence ID" value="CAM29403.1"/>
    <property type="molecule type" value="Genomic_DNA"/>
</dbReference>
<dbReference type="RefSeq" id="WP_002986625.1">
    <property type="nucleotide sequence ID" value="NC_009332.1"/>
</dbReference>
<dbReference type="SMR" id="A2RC31"/>
<dbReference type="GeneID" id="69900043"/>
<dbReference type="KEGG" id="spf:SpyM50061"/>
<dbReference type="HOGENOM" id="CLU_065898_2_2_9"/>
<dbReference type="GO" id="GO:0015935">
    <property type="term" value="C:small ribosomal subunit"/>
    <property type="evidence" value="ECO:0007669"/>
    <property type="project" value="InterPro"/>
</dbReference>
<dbReference type="GO" id="GO:0019843">
    <property type="term" value="F:rRNA binding"/>
    <property type="evidence" value="ECO:0007669"/>
    <property type="project" value="UniProtKB-UniRule"/>
</dbReference>
<dbReference type="GO" id="GO:0003735">
    <property type="term" value="F:structural constituent of ribosome"/>
    <property type="evidence" value="ECO:0007669"/>
    <property type="project" value="InterPro"/>
</dbReference>
<dbReference type="GO" id="GO:0006412">
    <property type="term" value="P:translation"/>
    <property type="evidence" value="ECO:0007669"/>
    <property type="project" value="UniProtKB-UniRule"/>
</dbReference>
<dbReference type="FunFam" id="3.30.160.20:FF:000001">
    <property type="entry name" value="30S ribosomal protein S5"/>
    <property type="match status" value="1"/>
</dbReference>
<dbReference type="FunFam" id="3.30.230.10:FF:000002">
    <property type="entry name" value="30S ribosomal protein S5"/>
    <property type="match status" value="1"/>
</dbReference>
<dbReference type="Gene3D" id="3.30.160.20">
    <property type="match status" value="1"/>
</dbReference>
<dbReference type="Gene3D" id="3.30.230.10">
    <property type="match status" value="1"/>
</dbReference>
<dbReference type="HAMAP" id="MF_01307_B">
    <property type="entry name" value="Ribosomal_uS5_B"/>
    <property type="match status" value="1"/>
</dbReference>
<dbReference type="InterPro" id="IPR020568">
    <property type="entry name" value="Ribosomal_Su5_D2-typ_SF"/>
</dbReference>
<dbReference type="InterPro" id="IPR000851">
    <property type="entry name" value="Ribosomal_uS5"/>
</dbReference>
<dbReference type="InterPro" id="IPR005712">
    <property type="entry name" value="Ribosomal_uS5_bac-type"/>
</dbReference>
<dbReference type="InterPro" id="IPR005324">
    <property type="entry name" value="Ribosomal_uS5_C"/>
</dbReference>
<dbReference type="InterPro" id="IPR013810">
    <property type="entry name" value="Ribosomal_uS5_N"/>
</dbReference>
<dbReference type="InterPro" id="IPR018192">
    <property type="entry name" value="Ribosomal_uS5_N_CS"/>
</dbReference>
<dbReference type="InterPro" id="IPR014721">
    <property type="entry name" value="Ribsml_uS5_D2-typ_fold_subgr"/>
</dbReference>
<dbReference type="NCBIfam" id="TIGR01021">
    <property type="entry name" value="rpsE_bact"/>
    <property type="match status" value="1"/>
</dbReference>
<dbReference type="PANTHER" id="PTHR48277">
    <property type="entry name" value="MITOCHONDRIAL RIBOSOMAL PROTEIN S5"/>
    <property type="match status" value="1"/>
</dbReference>
<dbReference type="PANTHER" id="PTHR48277:SF1">
    <property type="entry name" value="MITOCHONDRIAL RIBOSOMAL PROTEIN S5"/>
    <property type="match status" value="1"/>
</dbReference>
<dbReference type="Pfam" id="PF00333">
    <property type="entry name" value="Ribosomal_S5"/>
    <property type="match status" value="1"/>
</dbReference>
<dbReference type="Pfam" id="PF03719">
    <property type="entry name" value="Ribosomal_S5_C"/>
    <property type="match status" value="1"/>
</dbReference>
<dbReference type="SUPFAM" id="SSF54768">
    <property type="entry name" value="dsRNA-binding domain-like"/>
    <property type="match status" value="1"/>
</dbReference>
<dbReference type="SUPFAM" id="SSF54211">
    <property type="entry name" value="Ribosomal protein S5 domain 2-like"/>
    <property type="match status" value="1"/>
</dbReference>
<dbReference type="PROSITE" id="PS00585">
    <property type="entry name" value="RIBOSOMAL_S5"/>
    <property type="match status" value="1"/>
</dbReference>
<dbReference type="PROSITE" id="PS50881">
    <property type="entry name" value="S5_DSRBD"/>
    <property type="match status" value="1"/>
</dbReference>
<sequence>MAFKDNAVELEERVVAINRVTKVVKGGRRLRFAALVVVGDGNGRVGFGTGKAQEVPEAIRKAVEAAKKNMIEVPMVGTTIPHEVYTNFGGAKVLLKPAVEGSGVAAGGAVRAVIELAGVADITSKSLGSNTPINIVRATVEGLKQLKRAEEVAALRGISVSDLA</sequence>
<proteinExistence type="inferred from homology"/>
<reference key="1">
    <citation type="journal article" date="2007" name="J. Bacteriol.">
        <title>Complete genome of acute rheumatic fever-associated serotype M5 Streptococcus pyogenes strain Manfredo.</title>
        <authorList>
            <person name="Holden M.T.G."/>
            <person name="Scott A."/>
            <person name="Cherevach I."/>
            <person name="Chillingworth T."/>
            <person name="Churcher C."/>
            <person name="Cronin A."/>
            <person name="Dowd L."/>
            <person name="Feltwell T."/>
            <person name="Hamlin N."/>
            <person name="Holroyd S."/>
            <person name="Jagels K."/>
            <person name="Moule S."/>
            <person name="Mungall K."/>
            <person name="Quail M.A."/>
            <person name="Price C."/>
            <person name="Rabbinowitsch E."/>
            <person name="Sharp S."/>
            <person name="Skelton J."/>
            <person name="Whitehead S."/>
            <person name="Barrell B.G."/>
            <person name="Kehoe M."/>
            <person name="Parkhill J."/>
        </authorList>
    </citation>
    <scope>NUCLEOTIDE SEQUENCE [LARGE SCALE GENOMIC DNA]</scope>
    <source>
        <strain>Manfredo</strain>
    </source>
</reference>
<name>RS5_STRPG</name>
<feature type="chain" id="PRO_0000323211" description="Small ribosomal subunit protein uS5">
    <location>
        <begin position="1"/>
        <end position="164"/>
    </location>
</feature>
<feature type="domain" description="S5 DRBM" evidence="1">
    <location>
        <begin position="10"/>
        <end position="73"/>
    </location>
</feature>
<protein>
    <recommendedName>
        <fullName evidence="1">Small ribosomal subunit protein uS5</fullName>
    </recommendedName>
    <alternativeName>
        <fullName evidence="2">30S ribosomal protein S5</fullName>
    </alternativeName>
</protein>